<proteinExistence type="inferred from homology"/>
<dbReference type="EC" id="7.1.1.2"/>
<dbReference type="EMBL" id="X83390">
    <property type="protein sequence ID" value="CAA58306.1"/>
    <property type="molecule type" value="Genomic_DNA"/>
</dbReference>
<dbReference type="PIR" id="S59153">
    <property type="entry name" value="S59153"/>
</dbReference>
<dbReference type="RefSeq" id="NP_007339.1">
    <property type="nucleotide sequence ID" value="NC_001761.1"/>
</dbReference>
<dbReference type="SMR" id="P48902"/>
<dbReference type="GeneID" id="808000"/>
<dbReference type="CTD" id="4536"/>
<dbReference type="GO" id="GO:0005743">
    <property type="term" value="C:mitochondrial inner membrane"/>
    <property type="evidence" value="ECO:0007669"/>
    <property type="project" value="UniProtKB-SubCell"/>
</dbReference>
<dbReference type="GO" id="GO:0008137">
    <property type="term" value="F:NADH dehydrogenase (ubiquinone) activity"/>
    <property type="evidence" value="ECO:0007669"/>
    <property type="project" value="UniProtKB-EC"/>
</dbReference>
<dbReference type="GO" id="GO:0006120">
    <property type="term" value="P:mitochondrial electron transport, NADH to ubiquinone"/>
    <property type="evidence" value="ECO:0007669"/>
    <property type="project" value="TreeGrafter"/>
</dbReference>
<dbReference type="InterPro" id="IPR050175">
    <property type="entry name" value="Complex_I_Subunit_2"/>
</dbReference>
<dbReference type="InterPro" id="IPR001750">
    <property type="entry name" value="ND/Mrp_TM"/>
</dbReference>
<dbReference type="PANTHER" id="PTHR46552">
    <property type="entry name" value="NADH-UBIQUINONE OXIDOREDUCTASE CHAIN 2"/>
    <property type="match status" value="1"/>
</dbReference>
<dbReference type="PANTHER" id="PTHR46552:SF1">
    <property type="entry name" value="NADH-UBIQUINONE OXIDOREDUCTASE CHAIN 2"/>
    <property type="match status" value="1"/>
</dbReference>
<dbReference type="Pfam" id="PF00361">
    <property type="entry name" value="Proton_antipo_M"/>
    <property type="match status" value="1"/>
</dbReference>
<comment type="function">
    <text evidence="1">Core subunit of the mitochondrial membrane respiratory chain NADH dehydrogenase (Complex I) that is believed to belong to the minimal assembly required for catalysis. Complex I functions in the transfer of electrons from NADH to the respiratory chain. The immediate electron acceptor for the enzyme is believed to be ubiquinone (By similarity).</text>
</comment>
<comment type="catalytic activity">
    <reaction>
        <text>a ubiquinone + NADH + 5 H(+)(in) = a ubiquinol + NAD(+) + 4 H(+)(out)</text>
        <dbReference type="Rhea" id="RHEA:29091"/>
        <dbReference type="Rhea" id="RHEA-COMP:9565"/>
        <dbReference type="Rhea" id="RHEA-COMP:9566"/>
        <dbReference type="ChEBI" id="CHEBI:15378"/>
        <dbReference type="ChEBI" id="CHEBI:16389"/>
        <dbReference type="ChEBI" id="CHEBI:17976"/>
        <dbReference type="ChEBI" id="CHEBI:57540"/>
        <dbReference type="ChEBI" id="CHEBI:57945"/>
        <dbReference type="EC" id="7.1.1.2"/>
    </reaction>
</comment>
<comment type="subcellular location">
    <subcellularLocation>
        <location>Mitochondrion inner membrane</location>
        <topology>Multi-pass membrane protein</topology>
    </subcellularLocation>
</comment>
<comment type="similarity">
    <text evidence="3">Belongs to the complex I subunit 2 family.</text>
</comment>
<accession>P48902</accession>
<organism>
    <name type="scientific">Albinaria caerulea</name>
    <name type="common">Land snail</name>
    <dbReference type="NCBI Taxonomy" id="42349"/>
    <lineage>
        <taxon>Eukaryota</taxon>
        <taxon>Metazoa</taxon>
        <taxon>Spiralia</taxon>
        <taxon>Lophotrochozoa</taxon>
        <taxon>Mollusca</taxon>
        <taxon>Gastropoda</taxon>
        <taxon>Heterobranchia</taxon>
        <taxon>Euthyneura</taxon>
        <taxon>Panpulmonata</taxon>
        <taxon>Eupulmonata</taxon>
        <taxon>Stylommatophora</taxon>
        <taxon>Helicina</taxon>
        <taxon>Clausilioidea</taxon>
        <taxon>Clausiliidae</taxon>
        <taxon>Alopiinae</taxon>
        <taxon>Albinaria</taxon>
    </lineage>
</organism>
<feature type="chain" id="PRO_0000117540" description="NADH-ubiquinone oxidoreductase chain 2">
    <location>
        <begin position="1"/>
        <end position="307"/>
    </location>
</feature>
<feature type="transmembrane region" description="Helical" evidence="2">
    <location>
        <begin position="1"/>
        <end position="21"/>
    </location>
</feature>
<feature type="transmembrane region" description="Helical" evidence="2">
    <location>
        <begin position="25"/>
        <end position="45"/>
    </location>
</feature>
<feature type="transmembrane region" description="Helical" evidence="2">
    <location>
        <begin position="58"/>
        <end position="78"/>
    </location>
</feature>
<feature type="transmembrane region" description="Helical" evidence="2">
    <location>
        <begin position="88"/>
        <end position="108"/>
    </location>
</feature>
<feature type="transmembrane region" description="Helical" evidence="2">
    <location>
        <begin position="119"/>
        <end position="139"/>
    </location>
</feature>
<feature type="transmembrane region" description="Helical" evidence="2">
    <location>
        <begin position="144"/>
        <end position="164"/>
    </location>
</feature>
<feature type="transmembrane region" description="Helical" evidence="2">
    <location>
        <begin position="193"/>
        <end position="213"/>
    </location>
</feature>
<feature type="transmembrane region" description="Helical" evidence="2">
    <location>
        <begin position="217"/>
        <end position="237"/>
    </location>
</feature>
<feature type="transmembrane region" description="Helical" evidence="2">
    <location>
        <begin position="250"/>
        <end position="270"/>
    </location>
</feature>
<feature type="transmembrane region" description="Helical" evidence="2">
    <location>
        <begin position="287"/>
        <end position="307"/>
    </location>
</feature>
<geneLocation type="mitochondrion"/>
<evidence type="ECO:0000250" key="1"/>
<evidence type="ECO:0000255" key="2"/>
<evidence type="ECO:0000305" key="3"/>
<protein>
    <recommendedName>
        <fullName>NADH-ubiquinone oxidoreductase chain 2</fullName>
        <ecNumber>7.1.1.2</ecNumber>
    </recommendedName>
    <alternativeName>
        <fullName>NADH dehydrogenase subunit 2</fullName>
    </alternativeName>
</protein>
<sequence>MTLQSVLLGAMIILGPILSMTSSNWIIIWIGLEISLLGFVSYYMLMKKIMSGEGIMMYFLIQSVSSTVMLLNGLYIFVNHASSYIYLFIFITMLMLKIGMFPLHFWIIPVYSKLSYLNIGIVGLLLKIVPMWILMHMGCITSEMLNLITMLSVTSMLFGALIGMNLSKMRMVLGASTITHNGWLGMSCISGSLFKYFITYGFSLVILLVFLYLGDKMSISLSLLSLSGLPPFMLFIGKINVLLMMMETNLWFIVLVFAILSAVISLVYYLKFSVMFFMNMKNNYLKHYKMAMFLLVNVTFGMLLFLT</sequence>
<keyword id="KW-0249">Electron transport</keyword>
<keyword id="KW-0472">Membrane</keyword>
<keyword id="KW-0496">Mitochondrion</keyword>
<keyword id="KW-0999">Mitochondrion inner membrane</keyword>
<keyword id="KW-0520">NAD</keyword>
<keyword id="KW-0679">Respiratory chain</keyword>
<keyword id="KW-1278">Translocase</keyword>
<keyword id="KW-0812">Transmembrane</keyword>
<keyword id="KW-1133">Transmembrane helix</keyword>
<keyword id="KW-0813">Transport</keyword>
<keyword id="KW-0830">Ubiquinone</keyword>
<reference key="1">
    <citation type="journal article" date="1995" name="Genetics">
        <title>Complete sequence and gene organization of the mitochondrial genome of the land snail Albinaria coerulea.</title>
        <authorList>
            <person name="Hatzoglou E."/>
            <person name="Rodakis G.C."/>
            <person name="Lecanidou R."/>
        </authorList>
    </citation>
    <scope>NUCLEOTIDE SEQUENCE [GENOMIC DNA]</scope>
</reference>
<gene>
    <name type="primary">ND2</name>
</gene>
<name>NU2M_ALBCA</name>